<reference key="1">
    <citation type="journal article" date="1998" name="Nature">
        <title>The genome sequence of Rickettsia prowazekii and the origin of mitochondria.</title>
        <authorList>
            <person name="Andersson S.G.E."/>
            <person name="Zomorodipour A."/>
            <person name="Andersson J.O."/>
            <person name="Sicheritz-Ponten T."/>
            <person name="Alsmark U.C.M."/>
            <person name="Podowski R.M."/>
            <person name="Naeslund A.K."/>
            <person name="Eriksson A.-S."/>
            <person name="Winkler H.H."/>
            <person name="Kurland C.G."/>
        </authorList>
    </citation>
    <scope>NUCLEOTIDE SEQUENCE [LARGE SCALE GENOMIC DNA]</scope>
    <source>
        <strain>Madrid E</strain>
    </source>
</reference>
<reference key="2">
    <citation type="journal article" date="2000" name="Science">
        <title>Selfish DNA in protein-coding genes of Rickettsia.</title>
        <authorList>
            <person name="Ogata H."/>
            <person name="Audic S."/>
            <person name="Barbe V."/>
            <person name="Artiguenave F."/>
            <person name="Fournier P.-E."/>
            <person name="Raoult D."/>
            <person name="Claverie J.-M."/>
        </authorList>
    </citation>
    <scope>DOMAIN RPE1</scope>
</reference>
<keyword id="KW-1185">Reference proteome</keyword>
<protein>
    <recommendedName>
        <fullName>Uncharacterized protein RP474</fullName>
    </recommendedName>
</protein>
<dbReference type="EMBL" id="AJ235271">
    <property type="protein sequence ID" value="CAA14929.1"/>
    <property type="molecule type" value="Genomic_DNA"/>
</dbReference>
<dbReference type="PIR" id="G71706">
    <property type="entry name" value="G71706"/>
</dbReference>
<dbReference type="RefSeq" id="NP_220853.1">
    <property type="nucleotide sequence ID" value="NC_000963.1"/>
</dbReference>
<dbReference type="RefSeq" id="WP_004597715.1">
    <property type="nucleotide sequence ID" value="NC_000963.1"/>
</dbReference>
<dbReference type="SMR" id="Q9ZD70"/>
<dbReference type="STRING" id="272947.gene:17555554"/>
<dbReference type="EnsemblBacteria" id="CAA14929">
    <property type="protein sequence ID" value="CAA14929"/>
    <property type="gene ID" value="CAA14929"/>
</dbReference>
<dbReference type="KEGG" id="rpr:RP474"/>
<dbReference type="PATRIC" id="fig|272947.5.peg.485"/>
<dbReference type="eggNOG" id="COG1587">
    <property type="taxonomic scope" value="Bacteria"/>
</dbReference>
<dbReference type="HOGENOM" id="CLU_1033982_0_0_5"/>
<dbReference type="OrthoDB" id="7160749at2"/>
<dbReference type="Proteomes" id="UP000002480">
    <property type="component" value="Chromosome"/>
</dbReference>
<dbReference type="GO" id="GO:0004852">
    <property type="term" value="F:uroporphyrinogen-III synthase activity"/>
    <property type="evidence" value="ECO:0007669"/>
    <property type="project" value="InterPro"/>
</dbReference>
<dbReference type="GO" id="GO:0033014">
    <property type="term" value="P:tetrapyrrole biosynthetic process"/>
    <property type="evidence" value="ECO:0007669"/>
    <property type="project" value="InterPro"/>
</dbReference>
<dbReference type="Gene3D" id="3.40.50.10090">
    <property type="match status" value="1"/>
</dbReference>
<dbReference type="InterPro" id="IPR036108">
    <property type="entry name" value="4pyrrol_syn_uPrphyn_synt_sf"/>
</dbReference>
<dbReference type="InterPro" id="IPR005728">
    <property type="entry name" value="RPE1"/>
</dbReference>
<dbReference type="NCBIfam" id="TIGR01045">
    <property type="entry name" value="RPE1"/>
    <property type="match status" value="1"/>
</dbReference>
<dbReference type="SUPFAM" id="SSF69618">
    <property type="entry name" value="HemD-like"/>
    <property type="match status" value="1"/>
</dbReference>
<name>Y474_RICPR</name>
<accession>Q9ZD70</accession>
<sequence length="269" mass="31209">MKSVLLTRNIQENNETIQEINKYNLDLRYIHCSLIKYKTLDFNINILNNYSNIIITSKYAAHILADYNLKQDIWVVGNKTKQLLGKKVIYTANNIADLIQHFPTDLYKHTIYLSSNEITQDLPNKIARHIIYNVEYLNELPISIIQEFENIRYFSKPAYRNAFKANTIRATTAYKKVFNDPSLGSTYPLEVPLGKMSIDFILLYSQNSAKTLVRLLLQNNLLQYLQDSLVIAISLKVANIVRPFIKNVVYCDNQSPHDIIKLLYENAKI</sequence>
<feature type="chain" id="PRO_0000101380" description="Uncharacterized protein RP474">
    <location>
        <begin position="1"/>
        <end position="269"/>
    </location>
</feature>
<feature type="domain" description="RPE1 insert">
    <location>
        <begin position="152"/>
        <end position="197"/>
    </location>
</feature>
<organism>
    <name type="scientific">Rickettsia prowazekii (strain Madrid E)</name>
    <dbReference type="NCBI Taxonomy" id="272947"/>
    <lineage>
        <taxon>Bacteria</taxon>
        <taxon>Pseudomonadati</taxon>
        <taxon>Pseudomonadota</taxon>
        <taxon>Alphaproteobacteria</taxon>
        <taxon>Rickettsiales</taxon>
        <taxon>Rickettsiaceae</taxon>
        <taxon>Rickettsieae</taxon>
        <taxon>Rickettsia</taxon>
        <taxon>typhus group</taxon>
    </lineage>
</organism>
<proteinExistence type="predicted"/>
<gene>
    <name type="ordered locus">RP474</name>
</gene>